<evidence type="ECO:0000255" key="1">
    <source>
        <dbReference type="HAMAP-Rule" id="MF_00009"/>
    </source>
</evidence>
<dbReference type="EC" id="3.1.-.-" evidence="1"/>
<dbReference type="EMBL" id="AP009179">
    <property type="protein sequence ID" value="BAF72219.1"/>
    <property type="molecule type" value="Genomic_DNA"/>
</dbReference>
<dbReference type="RefSeq" id="WP_011980952.1">
    <property type="nucleotide sequence ID" value="NC_009663.1"/>
</dbReference>
<dbReference type="SMR" id="A6Q9R0"/>
<dbReference type="STRING" id="387093.SUN_1265"/>
<dbReference type="KEGG" id="sun:SUN_1265"/>
<dbReference type="eggNOG" id="COG0319">
    <property type="taxonomic scope" value="Bacteria"/>
</dbReference>
<dbReference type="HOGENOM" id="CLU_106710_3_0_7"/>
<dbReference type="Proteomes" id="UP000006378">
    <property type="component" value="Chromosome"/>
</dbReference>
<dbReference type="GO" id="GO:0005737">
    <property type="term" value="C:cytoplasm"/>
    <property type="evidence" value="ECO:0007669"/>
    <property type="project" value="UniProtKB-SubCell"/>
</dbReference>
<dbReference type="GO" id="GO:0004222">
    <property type="term" value="F:metalloendopeptidase activity"/>
    <property type="evidence" value="ECO:0007669"/>
    <property type="project" value="InterPro"/>
</dbReference>
<dbReference type="GO" id="GO:0004521">
    <property type="term" value="F:RNA endonuclease activity"/>
    <property type="evidence" value="ECO:0007669"/>
    <property type="project" value="UniProtKB-UniRule"/>
</dbReference>
<dbReference type="GO" id="GO:0008270">
    <property type="term" value="F:zinc ion binding"/>
    <property type="evidence" value="ECO:0007669"/>
    <property type="project" value="UniProtKB-UniRule"/>
</dbReference>
<dbReference type="GO" id="GO:0006364">
    <property type="term" value="P:rRNA processing"/>
    <property type="evidence" value="ECO:0007669"/>
    <property type="project" value="UniProtKB-UniRule"/>
</dbReference>
<dbReference type="Gene3D" id="3.40.390.30">
    <property type="entry name" value="Metalloproteases ('zincins'), catalytic domain"/>
    <property type="match status" value="1"/>
</dbReference>
<dbReference type="HAMAP" id="MF_00009">
    <property type="entry name" value="Endoribonucl_YbeY"/>
    <property type="match status" value="1"/>
</dbReference>
<dbReference type="InterPro" id="IPR023091">
    <property type="entry name" value="MetalPrtase_cat_dom_sf_prd"/>
</dbReference>
<dbReference type="InterPro" id="IPR002036">
    <property type="entry name" value="YbeY"/>
</dbReference>
<dbReference type="InterPro" id="IPR020549">
    <property type="entry name" value="YbeY_CS"/>
</dbReference>
<dbReference type="NCBIfam" id="TIGR00043">
    <property type="entry name" value="rRNA maturation RNase YbeY"/>
    <property type="match status" value="1"/>
</dbReference>
<dbReference type="PANTHER" id="PTHR46986">
    <property type="entry name" value="ENDORIBONUCLEASE YBEY, CHLOROPLASTIC"/>
    <property type="match status" value="1"/>
</dbReference>
<dbReference type="PANTHER" id="PTHR46986:SF1">
    <property type="entry name" value="ENDORIBONUCLEASE YBEY, CHLOROPLASTIC"/>
    <property type="match status" value="1"/>
</dbReference>
<dbReference type="Pfam" id="PF02130">
    <property type="entry name" value="YbeY"/>
    <property type="match status" value="1"/>
</dbReference>
<dbReference type="SUPFAM" id="SSF55486">
    <property type="entry name" value="Metalloproteases ('zincins'), catalytic domain"/>
    <property type="match status" value="1"/>
</dbReference>
<dbReference type="PROSITE" id="PS01306">
    <property type="entry name" value="UPF0054"/>
    <property type="match status" value="1"/>
</dbReference>
<protein>
    <recommendedName>
        <fullName evidence="1">Endoribonuclease YbeY</fullName>
        <ecNumber evidence="1">3.1.-.-</ecNumber>
    </recommendedName>
</protein>
<feature type="chain" id="PRO_0000321786" description="Endoribonuclease YbeY">
    <location>
        <begin position="1"/>
        <end position="147"/>
    </location>
</feature>
<feature type="binding site" evidence="1">
    <location>
        <position position="108"/>
    </location>
    <ligand>
        <name>Zn(2+)</name>
        <dbReference type="ChEBI" id="CHEBI:29105"/>
        <note>catalytic</note>
    </ligand>
</feature>
<feature type="binding site" evidence="1">
    <location>
        <position position="112"/>
    </location>
    <ligand>
        <name>Zn(2+)</name>
        <dbReference type="ChEBI" id="CHEBI:29105"/>
        <note>catalytic</note>
    </ligand>
</feature>
<feature type="binding site" evidence="1">
    <location>
        <position position="118"/>
    </location>
    <ligand>
        <name>Zn(2+)</name>
        <dbReference type="ChEBI" id="CHEBI:29105"/>
        <note>catalytic</note>
    </ligand>
</feature>
<organism>
    <name type="scientific">Sulfurovum sp. (strain NBC37-1)</name>
    <dbReference type="NCBI Taxonomy" id="387093"/>
    <lineage>
        <taxon>Bacteria</taxon>
        <taxon>Pseudomonadati</taxon>
        <taxon>Campylobacterota</taxon>
        <taxon>Epsilonproteobacteria</taxon>
        <taxon>Campylobacterales</taxon>
        <taxon>Sulfurovaceae</taxon>
        <taxon>Sulfurovum</taxon>
    </lineage>
</organism>
<comment type="function">
    <text evidence="1">Single strand-specific metallo-endoribonuclease involved in late-stage 70S ribosome quality control and in maturation of the 3' terminus of the 16S rRNA.</text>
</comment>
<comment type="cofactor">
    <cofactor evidence="1">
        <name>Zn(2+)</name>
        <dbReference type="ChEBI" id="CHEBI:29105"/>
    </cofactor>
    <text evidence="1">Binds 1 zinc ion.</text>
</comment>
<comment type="subcellular location">
    <subcellularLocation>
        <location evidence="1">Cytoplasm</location>
    </subcellularLocation>
</comment>
<comment type="similarity">
    <text evidence="1">Belongs to the endoribonuclease YbeY family.</text>
</comment>
<sequence>MHTIIELDNQTTLNVDIEALEKIAQSLTNREIELIITDNENIQELNREYRDRDNPTDVLSFPLETPFTEQSVFDIPLGTIVISADFVRERAKTYGHTEQDELKLLFIHGLLHLLGYDHETDEGEMRQKEREIIEEFGLPSSLIIRND</sequence>
<accession>A6Q9R0</accession>
<name>YBEY_SULNB</name>
<reference key="1">
    <citation type="journal article" date="2007" name="Proc. Natl. Acad. Sci. U.S.A.">
        <title>Deep-sea vent epsilon-proteobacterial genomes provide insights into emergence of pathogens.</title>
        <authorList>
            <person name="Nakagawa S."/>
            <person name="Takaki Y."/>
            <person name="Shimamura S."/>
            <person name="Reysenbach A.-L."/>
            <person name="Takai K."/>
            <person name="Horikoshi K."/>
        </authorList>
    </citation>
    <scope>NUCLEOTIDE SEQUENCE [LARGE SCALE GENOMIC DNA]</scope>
    <source>
        <strain>NBC37-1</strain>
    </source>
</reference>
<keyword id="KW-0963">Cytoplasm</keyword>
<keyword id="KW-0255">Endonuclease</keyword>
<keyword id="KW-0378">Hydrolase</keyword>
<keyword id="KW-0479">Metal-binding</keyword>
<keyword id="KW-0540">Nuclease</keyword>
<keyword id="KW-0690">Ribosome biogenesis</keyword>
<keyword id="KW-0698">rRNA processing</keyword>
<keyword id="KW-0862">Zinc</keyword>
<gene>
    <name evidence="1" type="primary">ybeY</name>
    <name type="ordered locus">SUN_1265</name>
</gene>
<proteinExistence type="inferred from homology"/>